<protein>
    <recommendedName>
        <fullName evidence="1">Asparagine--tRNA ligase</fullName>
        <ecNumber evidence="1">6.1.1.22</ecNumber>
    </recommendedName>
    <alternativeName>
        <fullName evidence="1">Asparaginyl-tRNA synthetase</fullName>
        <shortName evidence="1">AsnRS</shortName>
    </alternativeName>
</protein>
<name>SYN_BACCN</name>
<feature type="chain" id="PRO_1000081844" description="Asparagine--tRNA ligase">
    <location>
        <begin position="1"/>
        <end position="463"/>
    </location>
</feature>
<comment type="catalytic activity">
    <reaction evidence="1">
        <text>tRNA(Asn) + L-asparagine + ATP = L-asparaginyl-tRNA(Asn) + AMP + diphosphate + H(+)</text>
        <dbReference type="Rhea" id="RHEA:11180"/>
        <dbReference type="Rhea" id="RHEA-COMP:9659"/>
        <dbReference type="Rhea" id="RHEA-COMP:9674"/>
        <dbReference type="ChEBI" id="CHEBI:15378"/>
        <dbReference type="ChEBI" id="CHEBI:30616"/>
        <dbReference type="ChEBI" id="CHEBI:33019"/>
        <dbReference type="ChEBI" id="CHEBI:58048"/>
        <dbReference type="ChEBI" id="CHEBI:78442"/>
        <dbReference type="ChEBI" id="CHEBI:78515"/>
        <dbReference type="ChEBI" id="CHEBI:456215"/>
        <dbReference type="EC" id="6.1.1.22"/>
    </reaction>
</comment>
<comment type="subunit">
    <text evidence="1">Homodimer.</text>
</comment>
<comment type="subcellular location">
    <subcellularLocation>
        <location evidence="1">Cytoplasm</location>
    </subcellularLocation>
</comment>
<comment type="similarity">
    <text evidence="1">Belongs to the class-II aminoacyl-tRNA synthetase family.</text>
</comment>
<proteinExistence type="inferred from homology"/>
<accession>A7GTK8</accession>
<sequence length="463" mass="53415">MENTLVKSLYRETDKYVDQKVQVSGWIRNLRDSKVFGFIELNDGSFFKSVQIVFDTELDNFKEITKLPLSSSIRVEGKFIATPTAKQPFEIKAEKIEIEGLSDSDYPLQKKRHTFEYLRTIAHLRPRTNAFSATFRVRSIAAYAIHKFFQERGFVHVHTPIITGSDTEGAGEMFRVTTHDMNNLPKGEDGQVDDSKDFFGRETNLTVSGQLPAEAYALAFRDVYTFGPTFRAENSNTTRHAAEFWMVEPEIAFAELEDVMDLTEDMLKYAMKYVLEHAPEEMEFFNKFVDKTVLERMNNVINSDFGRITYTEAIKVLQESGADFKYPVEWGIDLQTEHERYLSEQVFKRPVFVTDYPKDIKAFYMRMNDDGKTVAATDLLVPGIGELIGGSQREERMDVLVDRIKELGMKEEDYWWYLELRKYGGTKHAGFGLGFERFLMYITGMGNIRDVIPFPRTPGSAEF</sequence>
<dbReference type="EC" id="6.1.1.22" evidence="1"/>
<dbReference type="EMBL" id="CP000764">
    <property type="protein sequence ID" value="ABS23466.1"/>
    <property type="molecule type" value="Genomic_DNA"/>
</dbReference>
<dbReference type="RefSeq" id="WP_012095705.1">
    <property type="nucleotide sequence ID" value="NC_009674.1"/>
</dbReference>
<dbReference type="SMR" id="A7GTK8"/>
<dbReference type="STRING" id="315749.Bcer98_3247"/>
<dbReference type="GeneID" id="33898492"/>
<dbReference type="KEGG" id="bcy:Bcer98_3247"/>
<dbReference type="eggNOG" id="COG0017">
    <property type="taxonomic scope" value="Bacteria"/>
</dbReference>
<dbReference type="HOGENOM" id="CLU_004553_2_0_9"/>
<dbReference type="OrthoDB" id="9762036at2"/>
<dbReference type="Proteomes" id="UP000002300">
    <property type="component" value="Chromosome"/>
</dbReference>
<dbReference type="GO" id="GO:0005737">
    <property type="term" value="C:cytoplasm"/>
    <property type="evidence" value="ECO:0007669"/>
    <property type="project" value="UniProtKB-SubCell"/>
</dbReference>
<dbReference type="GO" id="GO:0004816">
    <property type="term" value="F:asparagine-tRNA ligase activity"/>
    <property type="evidence" value="ECO:0007669"/>
    <property type="project" value="UniProtKB-UniRule"/>
</dbReference>
<dbReference type="GO" id="GO:0005524">
    <property type="term" value="F:ATP binding"/>
    <property type="evidence" value="ECO:0007669"/>
    <property type="project" value="UniProtKB-UniRule"/>
</dbReference>
<dbReference type="GO" id="GO:0140096">
    <property type="term" value="F:catalytic activity, acting on a protein"/>
    <property type="evidence" value="ECO:0007669"/>
    <property type="project" value="UniProtKB-ARBA"/>
</dbReference>
<dbReference type="GO" id="GO:0003676">
    <property type="term" value="F:nucleic acid binding"/>
    <property type="evidence" value="ECO:0007669"/>
    <property type="project" value="InterPro"/>
</dbReference>
<dbReference type="GO" id="GO:0016740">
    <property type="term" value="F:transferase activity"/>
    <property type="evidence" value="ECO:0007669"/>
    <property type="project" value="UniProtKB-ARBA"/>
</dbReference>
<dbReference type="GO" id="GO:0006421">
    <property type="term" value="P:asparaginyl-tRNA aminoacylation"/>
    <property type="evidence" value="ECO:0007669"/>
    <property type="project" value="UniProtKB-UniRule"/>
</dbReference>
<dbReference type="CDD" id="cd00776">
    <property type="entry name" value="AsxRS_core"/>
    <property type="match status" value="1"/>
</dbReference>
<dbReference type="CDD" id="cd04318">
    <property type="entry name" value="EcAsnRS_like_N"/>
    <property type="match status" value="1"/>
</dbReference>
<dbReference type="FunFam" id="3.30.930.10:FF:000016">
    <property type="entry name" value="Asparagine--tRNA ligase"/>
    <property type="match status" value="1"/>
</dbReference>
<dbReference type="Gene3D" id="3.30.930.10">
    <property type="entry name" value="Bira Bifunctional Protein, Domain 2"/>
    <property type="match status" value="1"/>
</dbReference>
<dbReference type="Gene3D" id="2.40.50.140">
    <property type="entry name" value="Nucleic acid-binding proteins"/>
    <property type="match status" value="1"/>
</dbReference>
<dbReference type="HAMAP" id="MF_00534">
    <property type="entry name" value="Asn_tRNA_synth"/>
    <property type="match status" value="1"/>
</dbReference>
<dbReference type="InterPro" id="IPR004364">
    <property type="entry name" value="Aa-tRNA-synt_II"/>
</dbReference>
<dbReference type="InterPro" id="IPR006195">
    <property type="entry name" value="aa-tRNA-synth_II"/>
</dbReference>
<dbReference type="InterPro" id="IPR045864">
    <property type="entry name" value="aa-tRNA-synth_II/BPL/LPL"/>
</dbReference>
<dbReference type="InterPro" id="IPR004522">
    <property type="entry name" value="Asn-tRNA-ligase"/>
</dbReference>
<dbReference type="InterPro" id="IPR002312">
    <property type="entry name" value="Asp/Asn-tRNA-synth_IIb"/>
</dbReference>
<dbReference type="InterPro" id="IPR012340">
    <property type="entry name" value="NA-bd_OB-fold"/>
</dbReference>
<dbReference type="InterPro" id="IPR004365">
    <property type="entry name" value="NA-bd_OB_tRNA"/>
</dbReference>
<dbReference type="NCBIfam" id="TIGR00457">
    <property type="entry name" value="asnS"/>
    <property type="match status" value="1"/>
</dbReference>
<dbReference type="NCBIfam" id="NF003037">
    <property type="entry name" value="PRK03932.1"/>
    <property type="match status" value="1"/>
</dbReference>
<dbReference type="PANTHER" id="PTHR22594:SF34">
    <property type="entry name" value="ASPARAGINE--TRNA LIGASE, MITOCHONDRIAL-RELATED"/>
    <property type="match status" value="1"/>
</dbReference>
<dbReference type="PANTHER" id="PTHR22594">
    <property type="entry name" value="ASPARTYL/LYSYL-TRNA SYNTHETASE"/>
    <property type="match status" value="1"/>
</dbReference>
<dbReference type="Pfam" id="PF00152">
    <property type="entry name" value="tRNA-synt_2"/>
    <property type="match status" value="1"/>
</dbReference>
<dbReference type="Pfam" id="PF01336">
    <property type="entry name" value="tRNA_anti-codon"/>
    <property type="match status" value="1"/>
</dbReference>
<dbReference type="PRINTS" id="PR01042">
    <property type="entry name" value="TRNASYNTHASP"/>
</dbReference>
<dbReference type="SUPFAM" id="SSF55681">
    <property type="entry name" value="Class II aaRS and biotin synthetases"/>
    <property type="match status" value="1"/>
</dbReference>
<dbReference type="SUPFAM" id="SSF50249">
    <property type="entry name" value="Nucleic acid-binding proteins"/>
    <property type="match status" value="1"/>
</dbReference>
<dbReference type="PROSITE" id="PS50862">
    <property type="entry name" value="AA_TRNA_LIGASE_II"/>
    <property type="match status" value="1"/>
</dbReference>
<gene>
    <name evidence="1" type="primary">asnS</name>
    <name type="ordered locus">Bcer98_3247</name>
</gene>
<organism>
    <name type="scientific">Bacillus cytotoxicus (strain DSM 22905 / CIP 110041 / 391-98 / NVH 391-98)</name>
    <dbReference type="NCBI Taxonomy" id="315749"/>
    <lineage>
        <taxon>Bacteria</taxon>
        <taxon>Bacillati</taxon>
        <taxon>Bacillota</taxon>
        <taxon>Bacilli</taxon>
        <taxon>Bacillales</taxon>
        <taxon>Bacillaceae</taxon>
        <taxon>Bacillus</taxon>
        <taxon>Bacillus cereus group</taxon>
    </lineage>
</organism>
<keyword id="KW-0030">Aminoacyl-tRNA synthetase</keyword>
<keyword id="KW-0067">ATP-binding</keyword>
<keyword id="KW-0963">Cytoplasm</keyword>
<keyword id="KW-0436">Ligase</keyword>
<keyword id="KW-0547">Nucleotide-binding</keyword>
<keyword id="KW-0648">Protein biosynthesis</keyword>
<evidence type="ECO:0000255" key="1">
    <source>
        <dbReference type="HAMAP-Rule" id="MF_00534"/>
    </source>
</evidence>
<reference key="1">
    <citation type="journal article" date="2008" name="Chem. Biol. Interact.">
        <title>Extending the Bacillus cereus group genomics to putative food-borne pathogens of different toxicity.</title>
        <authorList>
            <person name="Lapidus A."/>
            <person name="Goltsman E."/>
            <person name="Auger S."/>
            <person name="Galleron N."/>
            <person name="Segurens B."/>
            <person name="Dossat C."/>
            <person name="Land M.L."/>
            <person name="Broussolle V."/>
            <person name="Brillard J."/>
            <person name="Guinebretiere M.-H."/>
            <person name="Sanchis V."/>
            <person name="Nguen-the C."/>
            <person name="Lereclus D."/>
            <person name="Richardson P."/>
            <person name="Wincker P."/>
            <person name="Weissenbach J."/>
            <person name="Ehrlich S.D."/>
            <person name="Sorokin A."/>
        </authorList>
    </citation>
    <scope>NUCLEOTIDE SEQUENCE [LARGE SCALE GENOMIC DNA]</scope>
    <source>
        <strain>DSM 22905 / CIP 110041 / 391-98 / NVH 391-98</strain>
    </source>
</reference>